<gene>
    <name type="primary">CHP1</name>
    <name type="synonym">CHP</name>
</gene>
<name>CHP1_BOVIN</name>
<feature type="initiator methionine" description="Removed" evidence="3">
    <location>
        <position position="1"/>
    </location>
</feature>
<feature type="chain" id="PRO_0000312746" description="Calcineurin B homologous protein 1">
    <location>
        <begin position="2"/>
        <end position="195"/>
    </location>
</feature>
<feature type="domain" description="EF-hand 1" evidence="4">
    <location>
        <begin position="26"/>
        <end position="61"/>
    </location>
</feature>
<feature type="domain" description="EF-hand 2" evidence="5">
    <location>
        <begin position="66"/>
        <end position="101"/>
    </location>
</feature>
<feature type="domain" description="EF-hand 3" evidence="4">
    <location>
        <begin position="110"/>
        <end position="145"/>
    </location>
</feature>
<feature type="domain" description="EF-hand 4" evidence="4">
    <location>
        <begin position="151"/>
        <end position="186"/>
    </location>
</feature>
<feature type="short sequence motif" description="Necessary for association with microtubule and interaction with GAPDH" evidence="1">
    <location>
        <begin position="2"/>
        <end position="6"/>
    </location>
</feature>
<feature type="short sequence motif" description="Nuclear export signal 1" evidence="1">
    <location>
        <begin position="138"/>
        <end position="147"/>
    </location>
</feature>
<feature type="short sequence motif" description="Nuclear export signal 2" evidence="1">
    <location>
        <begin position="176"/>
        <end position="185"/>
    </location>
</feature>
<feature type="binding site" evidence="4">
    <location>
        <position position="123"/>
    </location>
    <ligand>
        <name>Ca(2+)</name>
        <dbReference type="ChEBI" id="CHEBI:29108"/>
        <label>1</label>
    </ligand>
</feature>
<feature type="binding site" evidence="4">
    <location>
        <position position="125"/>
    </location>
    <ligand>
        <name>Ca(2+)</name>
        <dbReference type="ChEBI" id="CHEBI:29108"/>
        <label>1</label>
    </ligand>
</feature>
<feature type="binding site" evidence="4">
    <location>
        <position position="127"/>
    </location>
    <ligand>
        <name>Ca(2+)</name>
        <dbReference type="ChEBI" id="CHEBI:29108"/>
        <label>1</label>
    </ligand>
</feature>
<feature type="binding site" evidence="4">
    <location>
        <position position="129"/>
    </location>
    <ligand>
        <name>Ca(2+)</name>
        <dbReference type="ChEBI" id="CHEBI:29108"/>
        <label>1</label>
    </ligand>
</feature>
<feature type="binding site" evidence="4">
    <location>
        <position position="134"/>
    </location>
    <ligand>
        <name>Ca(2+)</name>
        <dbReference type="ChEBI" id="CHEBI:29108"/>
        <label>1</label>
    </ligand>
</feature>
<feature type="binding site" evidence="5">
    <location>
        <position position="164"/>
    </location>
    <ligand>
        <name>Ca(2+)</name>
        <dbReference type="ChEBI" id="CHEBI:29108"/>
        <label>2</label>
    </ligand>
</feature>
<feature type="binding site" evidence="5">
    <location>
        <position position="166"/>
    </location>
    <ligand>
        <name>Ca(2+)</name>
        <dbReference type="ChEBI" id="CHEBI:29108"/>
        <label>2</label>
    </ligand>
</feature>
<feature type="binding site" evidence="5">
    <location>
        <position position="168"/>
    </location>
    <ligand>
        <name>Ca(2+)</name>
        <dbReference type="ChEBI" id="CHEBI:29108"/>
        <label>2</label>
    </ligand>
</feature>
<feature type="binding site" evidence="5">
    <location>
        <position position="175"/>
    </location>
    <ligand>
        <name>Ca(2+)</name>
        <dbReference type="ChEBI" id="CHEBI:29108"/>
        <label>2</label>
    </ligand>
</feature>
<feature type="lipid moiety-binding region" description="N-myristoyl glycine" evidence="3">
    <location>
        <position position="2"/>
    </location>
</feature>
<keyword id="KW-0106">Calcium</keyword>
<keyword id="KW-1003">Cell membrane</keyword>
<keyword id="KW-0963">Cytoplasm</keyword>
<keyword id="KW-0206">Cytoskeleton</keyword>
<keyword id="KW-0256">Endoplasmic reticulum</keyword>
<keyword id="KW-0449">Lipoprotein</keyword>
<keyword id="KW-0472">Membrane</keyword>
<keyword id="KW-0479">Metal-binding</keyword>
<keyword id="KW-0519">Myristate</keyword>
<keyword id="KW-0539">Nucleus</keyword>
<keyword id="KW-0597">Phosphoprotein</keyword>
<keyword id="KW-0649">Protein kinase inhibitor</keyword>
<keyword id="KW-0653">Protein transport</keyword>
<keyword id="KW-1185">Reference proteome</keyword>
<keyword id="KW-0677">Repeat</keyword>
<keyword id="KW-0813">Transport</keyword>
<protein>
    <recommendedName>
        <fullName>Calcineurin B homologous protein 1</fullName>
    </recommendedName>
    <alternativeName>
        <fullName>Calcineurin B-like protein</fullName>
    </alternativeName>
    <alternativeName>
        <fullName>Calcium-binding protein CHP</fullName>
    </alternativeName>
    <alternativeName>
        <fullName>Calcium-binding protein p22</fullName>
    </alternativeName>
    <alternativeName>
        <fullName>EF-hand calcium-binding domain-containing protein p22</fullName>
    </alternativeName>
</protein>
<organism>
    <name type="scientific">Bos taurus</name>
    <name type="common">Bovine</name>
    <dbReference type="NCBI Taxonomy" id="9913"/>
    <lineage>
        <taxon>Eukaryota</taxon>
        <taxon>Metazoa</taxon>
        <taxon>Chordata</taxon>
        <taxon>Craniata</taxon>
        <taxon>Vertebrata</taxon>
        <taxon>Euteleostomi</taxon>
        <taxon>Mammalia</taxon>
        <taxon>Eutheria</taxon>
        <taxon>Laurasiatheria</taxon>
        <taxon>Artiodactyla</taxon>
        <taxon>Ruminantia</taxon>
        <taxon>Pecora</taxon>
        <taxon>Bovidae</taxon>
        <taxon>Bovinae</taxon>
        <taxon>Bos</taxon>
    </lineage>
</organism>
<sequence>MGSRASTLLRDEELEEIKKETGFSHSQITRLYSRFTSLDKGENGTLSREDFQRIPELAINPLGDRIINAFFPEGEDQVNFRGFMRTLAHFRPIEDNEKSKDVNGPEPLNSRSNKLHFAFRLYDLDKDDKISRDELLQVLRMMVGVNISDEQLGSIADRTIQEADQDGDSAISFTEFVKVLEKVDVEQKMSIRFLH</sequence>
<comment type="function">
    <text evidence="3">Calcium-binding protein involved in different processes such as regulation of vesicular trafficking, plasma membrane Na(+)/H(+) exchanger and gene transcription. Involved in the constitutive exocytic membrane traffic. Mediates the association between microtubules and membrane-bound organelles of the endoplasmic reticulum and Golgi apparatus and is also required for the targeting and fusion of transcytotic vesicles (TCV) with the plasma membrane. Functions as an integral cofactor in cell pH regulation by controlling plasma membrane-type Na(+)/H(+) exchange activity. Affects the pH sensitivity of SLC9A1/NHE1 by increasing its sensitivity at acidic pH. Required for the stabilization and localization of SLC9A1/NHE1 at the plasma membrane. Inhibits serum- and GTPase-stimulated Na(+)/H(+) exchange. Plays a role as an inhibitor of ribosomal RNA transcription by repressing the nucleolar UBF1 transcriptional activity. May sequester UBF1 in the nucleoplasm and limit its translocation to the nucleolus. Associates to the ribosomal gene promoter. Acts as a negative regulator of the calcineurin/NFAT signaling pathway. Inhibits NFAT nuclear translocation and transcriptional activity by suppressing the calcium-dependent calcineurin phosphatase activity. Also negatively regulates the kinase activity of the apoptosis-induced kinase STK17B. Inhibits both STK17B auto- and substrate-phosphorylations in a calcium-dependent manner (By similarity).</text>
</comment>
<comment type="subunit">
    <text evidence="3">Monomer. Interacts with STK17B; the interaction occurs in a calcium-independent manner and induces the translocation of CHP1 from the Golgi to the nucleus. Interacts with GAPDH; the interaction is direct, occurs in a N-myristoylation-dependent manner and facilitates the ability of CHP1 to bind microtubules. Interacts with KIF1B (via the C-terminal end of the kinesin-motor domain); the interaction occurs in a calcium-dependent manner. Associates (via C-terminal domain) with microtubules; the association occurs with polymerized microtubules during the cell cycle in a myristoylation- and calcium-independent manner and is enhanced by GAPDH. Interacts with PPP3CA. Interacts with SLC9A1/NHE1 (via the cytoplasmic C-terminal domain); the interaction occurs at the plasma membrane in a calcium-dependent manner and at a domain that is critical for growth factor stimulation of the exchanger (By similarity). Interacts with SLC9A3; increases SLC9A3 trafficking and activity at the plasma membrane (By similarity).</text>
</comment>
<comment type="subcellular location">
    <subcellularLocation>
        <location evidence="2">Nucleus</location>
    </subcellularLocation>
    <subcellularLocation>
        <location evidence="2">Cytoplasm</location>
    </subcellularLocation>
    <subcellularLocation>
        <location evidence="2">Cytoplasm</location>
        <location evidence="2">Cytoskeleton</location>
    </subcellularLocation>
    <subcellularLocation>
        <location evidence="2">Endomembrane system</location>
    </subcellularLocation>
    <subcellularLocation>
        <location evidence="2">Endoplasmic reticulum-Golgi intermediate compartment</location>
    </subcellularLocation>
    <subcellularLocation>
        <location evidence="2">Endoplasmic reticulum</location>
    </subcellularLocation>
    <subcellularLocation>
        <location evidence="2">Cell membrane</location>
    </subcellularLocation>
    <subcellularLocation>
        <location evidence="3">Membrane</location>
        <topology evidence="3">Lipid-anchor</topology>
    </subcellularLocation>
    <text evidence="2">Localizes in cytoplasmic compartments in dividing cells. Localizes in the nucleus in quiescent cells. Exported from the nucleus to the cytoplasm through a nuclear export signal (NES) and CRM1-dependent pathway. May shuttle between nucleus and cytoplasm. Localizes with the microtubule-organizing center (MTOC) and extends toward the periphery along microtubules. Associates with membranes of the early secretory pathway in a GAPDH-independent, N-myristoylation- and calcium-dependent manner. Colocalizes with the mitotic spindle microtubules. Colocalizes with GAPDH along microtubules. Colocalizes with SLC9A1 at the endoplasmic reticulum and plasma membrane. Colocalizes with STK17B at the plasma membrane.</text>
</comment>
<comment type="PTM">
    <text evidence="1">Phosphorylated; decreased phosphorylation is associated with an increase in SLC9A1/NHE1 Na(+)/H(+) exchange activity. Phosphorylation occurs in serum-dependent manner. The phosphorylation state may regulate the binding to SLC9A1/NHE1 (By similarity).</text>
</comment>
<comment type="PTM">
    <text evidence="1">Both N-myristoylation and calcium-mediated conformational changes are essential for its function in exocytic traffic. N-myristoylation is required for its association with microtubules and interaction with GAPDH, but not for the constitutive association to membranes (By similarity).</text>
</comment>
<comment type="similarity">
    <text evidence="5">Belongs to the calcineurin regulatory subunit family. CHP subfamily.</text>
</comment>
<reference key="1">
    <citation type="journal article" date="2005" name="BMC Genomics">
        <title>Characterization of 954 bovine full-CDS cDNA sequences.</title>
        <authorList>
            <person name="Harhay G.P."/>
            <person name="Sonstegard T.S."/>
            <person name="Keele J.W."/>
            <person name="Heaton M.P."/>
            <person name="Clawson M.L."/>
            <person name="Snelling W.M."/>
            <person name="Wiedmann R.T."/>
            <person name="Van Tassell C.P."/>
            <person name="Smith T.P.L."/>
        </authorList>
    </citation>
    <scope>NUCLEOTIDE SEQUENCE [LARGE SCALE MRNA]</scope>
</reference>
<reference key="2">
    <citation type="submission" date="2005-08" db="EMBL/GenBank/DDBJ databases">
        <authorList>
            <consortium name="NIH - Mammalian Gene Collection (MGC) project"/>
        </authorList>
    </citation>
    <scope>NUCLEOTIDE SEQUENCE [LARGE SCALE MRNA]</scope>
    <source>
        <strain>Crossbred X Angus</strain>
        <tissue>Liver</tissue>
    </source>
</reference>
<dbReference type="EMBL" id="BT030715">
    <property type="protein sequence ID" value="ABS45031.1"/>
    <property type="molecule type" value="mRNA"/>
</dbReference>
<dbReference type="EMBL" id="BC103418">
    <property type="protein sequence ID" value="AAI03419.1"/>
    <property type="molecule type" value="mRNA"/>
</dbReference>
<dbReference type="RefSeq" id="NP_001069044.1">
    <property type="nucleotide sequence ID" value="NM_001075576.1"/>
</dbReference>
<dbReference type="SMR" id="Q3SYS6"/>
<dbReference type="FunCoup" id="Q3SYS6">
    <property type="interactions" value="2733"/>
</dbReference>
<dbReference type="STRING" id="9913.ENSBTAP00000038767"/>
<dbReference type="PaxDb" id="9913-ENSBTAP00000038767"/>
<dbReference type="Ensembl" id="ENSBTAT00000038963.4">
    <property type="protein sequence ID" value="ENSBTAP00000038767.2"/>
    <property type="gene ID" value="ENSBTAG00000027173.4"/>
</dbReference>
<dbReference type="GeneID" id="512662"/>
<dbReference type="KEGG" id="bta:512662"/>
<dbReference type="CTD" id="11261"/>
<dbReference type="VEuPathDB" id="HostDB:ENSBTAG00000027173"/>
<dbReference type="VGNC" id="VGNC:27310">
    <property type="gene designation" value="CHP1"/>
</dbReference>
<dbReference type="eggNOG" id="KOG0034">
    <property type="taxonomic scope" value="Eukaryota"/>
</dbReference>
<dbReference type="GeneTree" id="ENSGT00940000154629"/>
<dbReference type="HOGENOM" id="CLU_061288_10_5_1"/>
<dbReference type="InParanoid" id="Q3SYS6"/>
<dbReference type="OMA" id="LKFAFRM"/>
<dbReference type="OrthoDB" id="191686at2759"/>
<dbReference type="TreeFam" id="TF354284"/>
<dbReference type="Reactome" id="R-BTA-2160916">
    <property type="pathway name" value="Hyaluronan uptake and degradation"/>
</dbReference>
<dbReference type="Proteomes" id="UP000009136">
    <property type="component" value="Chromosome 10"/>
</dbReference>
<dbReference type="Bgee" id="ENSBTAG00000027173">
    <property type="expression patterns" value="Expressed in corpus epididymis and 103 other cell types or tissues"/>
</dbReference>
<dbReference type="GO" id="GO:0005737">
    <property type="term" value="C:cytoplasm"/>
    <property type="evidence" value="ECO:0000250"/>
    <property type="project" value="UniProtKB"/>
</dbReference>
<dbReference type="GO" id="GO:0005783">
    <property type="term" value="C:endoplasmic reticulum"/>
    <property type="evidence" value="ECO:0000250"/>
    <property type="project" value="UniProtKB"/>
</dbReference>
<dbReference type="GO" id="GO:0005793">
    <property type="term" value="C:endoplasmic reticulum-Golgi intermediate compartment"/>
    <property type="evidence" value="ECO:0007669"/>
    <property type="project" value="UniProtKB-SubCell"/>
</dbReference>
<dbReference type="GO" id="GO:0000139">
    <property type="term" value="C:Golgi membrane"/>
    <property type="evidence" value="ECO:0000250"/>
    <property type="project" value="UniProtKB"/>
</dbReference>
<dbReference type="GO" id="GO:0045121">
    <property type="term" value="C:membrane raft"/>
    <property type="evidence" value="ECO:0007669"/>
    <property type="project" value="Ensembl"/>
</dbReference>
<dbReference type="GO" id="GO:0015630">
    <property type="term" value="C:microtubule cytoskeleton"/>
    <property type="evidence" value="ECO:0000250"/>
    <property type="project" value="UniProtKB"/>
</dbReference>
<dbReference type="GO" id="GO:0005634">
    <property type="term" value="C:nucleus"/>
    <property type="evidence" value="ECO:0000250"/>
    <property type="project" value="UniProtKB"/>
</dbReference>
<dbReference type="GO" id="GO:0005886">
    <property type="term" value="C:plasma membrane"/>
    <property type="evidence" value="ECO:0000250"/>
    <property type="project" value="UniProtKB"/>
</dbReference>
<dbReference type="GO" id="GO:0030133">
    <property type="term" value="C:transport vesicle"/>
    <property type="evidence" value="ECO:0000250"/>
    <property type="project" value="UniProtKB"/>
</dbReference>
<dbReference type="GO" id="GO:1990351">
    <property type="term" value="C:transporter complex"/>
    <property type="evidence" value="ECO:0007669"/>
    <property type="project" value="Ensembl"/>
</dbReference>
<dbReference type="GO" id="GO:0005509">
    <property type="term" value="F:calcium ion binding"/>
    <property type="evidence" value="ECO:0000250"/>
    <property type="project" value="UniProtKB"/>
</dbReference>
<dbReference type="GO" id="GO:0048306">
    <property type="term" value="F:calcium-dependent protein binding"/>
    <property type="evidence" value="ECO:0000250"/>
    <property type="project" value="UniProtKB"/>
</dbReference>
<dbReference type="GO" id="GO:0019900">
    <property type="term" value="F:kinase binding"/>
    <property type="evidence" value="ECO:0000250"/>
    <property type="project" value="UniProtKB"/>
</dbReference>
<dbReference type="GO" id="GO:0008017">
    <property type="term" value="F:microtubule binding"/>
    <property type="evidence" value="ECO:0000250"/>
    <property type="project" value="UniProtKB"/>
</dbReference>
<dbReference type="GO" id="GO:0004860">
    <property type="term" value="F:protein kinase inhibitor activity"/>
    <property type="evidence" value="ECO:0007669"/>
    <property type="project" value="UniProtKB-KW"/>
</dbReference>
<dbReference type="GO" id="GO:0015385">
    <property type="term" value="F:sodium:proton antiporter activity"/>
    <property type="evidence" value="ECO:0007669"/>
    <property type="project" value="Ensembl"/>
</dbReference>
<dbReference type="GO" id="GO:0071468">
    <property type="term" value="P:cellular response to acidic pH"/>
    <property type="evidence" value="ECO:0000250"/>
    <property type="project" value="UniProtKB"/>
</dbReference>
<dbReference type="GO" id="GO:0031122">
    <property type="term" value="P:cytoplasmic microtubule organization"/>
    <property type="evidence" value="ECO:0000250"/>
    <property type="project" value="UniProtKB"/>
</dbReference>
<dbReference type="GO" id="GO:0022406">
    <property type="term" value="P:membrane docking"/>
    <property type="evidence" value="ECO:0000250"/>
    <property type="project" value="UniProtKB"/>
</dbReference>
<dbReference type="GO" id="GO:0061025">
    <property type="term" value="P:membrane fusion"/>
    <property type="evidence" value="ECO:0000250"/>
    <property type="project" value="UniProtKB"/>
</dbReference>
<dbReference type="GO" id="GO:0061024">
    <property type="term" value="P:membrane organization"/>
    <property type="evidence" value="ECO:0000250"/>
    <property type="project" value="UniProtKB"/>
</dbReference>
<dbReference type="GO" id="GO:0001578">
    <property type="term" value="P:microtubule bundle formation"/>
    <property type="evidence" value="ECO:0000250"/>
    <property type="project" value="UniProtKB"/>
</dbReference>
<dbReference type="GO" id="GO:0070885">
    <property type="term" value="P:negative regulation of calcineurin-NFAT signaling cascade"/>
    <property type="evidence" value="ECO:0000250"/>
    <property type="project" value="UniProtKB"/>
</dbReference>
<dbReference type="GO" id="GO:0032088">
    <property type="term" value="P:negative regulation of NF-kappaB transcription factor activity"/>
    <property type="evidence" value="ECO:0000250"/>
    <property type="project" value="UniProtKB"/>
</dbReference>
<dbReference type="GO" id="GO:0010923">
    <property type="term" value="P:negative regulation of phosphatase activity"/>
    <property type="evidence" value="ECO:0000250"/>
    <property type="project" value="UniProtKB"/>
</dbReference>
<dbReference type="GO" id="GO:0031953">
    <property type="term" value="P:negative regulation of protein autophosphorylation"/>
    <property type="evidence" value="ECO:0000250"/>
    <property type="project" value="UniProtKB"/>
</dbReference>
<dbReference type="GO" id="GO:0042308">
    <property type="term" value="P:negative regulation of protein import into nucleus"/>
    <property type="evidence" value="ECO:0000250"/>
    <property type="project" value="UniProtKB"/>
</dbReference>
<dbReference type="GO" id="GO:0006469">
    <property type="term" value="P:negative regulation of protein kinase activity"/>
    <property type="evidence" value="ECO:0000250"/>
    <property type="project" value="UniProtKB"/>
</dbReference>
<dbReference type="GO" id="GO:0001933">
    <property type="term" value="P:negative regulation of protein phosphorylation"/>
    <property type="evidence" value="ECO:0000250"/>
    <property type="project" value="UniProtKB"/>
</dbReference>
<dbReference type="GO" id="GO:0031397">
    <property type="term" value="P:negative regulation of protein ubiquitination"/>
    <property type="evidence" value="ECO:0000250"/>
    <property type="project" value="UniProtKB"/>
</dbReference>
<dbReference type="GO" id="GO:0071073">
    <property type="term" value="P:positive regulation of phospholipid biosynthetic process"/>
    <property type="evidence" value="ECO:0007669"/>
    <property type="project" value="Ensembl"/>
</dbReference>
<dbReference type="GO" id="GO:0060050">
    <property type="term" value="P:positive regulation of protein glycosylation"/>
    <property type="evidence" value="ECO:0000250"/>
    <property type="project" value="UniProtKB"/>
</dbReference>
<dbReference type="GO" id="GO:0090314">
    <property type="term" value="P:positive regulation of protein targeting to membrane"/>
    <property type="evidence" value="ECO:0000250"/>
    <property type="project" value="UniProtKB"/>
</dbReference>
<dbReference type="GO" id="GO:0051222">
    <property type="term" value="P:positive regulation of protein transport"/>
    <property type="evidence" value="ECO:0000250"/>
    <property type="project" value="UniProtKB"/>
</dbReference>
<dbReference type="GO" id="GO:0032417">
    <property type="term" value="P:positive regulation of sodium:proton antiporter activity"/>
    <property type="evidence" value="ECO:0000250"/>
    <property type="project" value="UniProtKB"/>
</dbReference>
<dbReference type="GO" id="GO:0006611">
    <property type="term" value="P:protein export from nucleus"/>
    <property type="evidence" value="ECO:0000250"/>
    <property type="project" value="UniProtKB"/>
</dbReference>
<dbReference type="GO" id="GO:0050821">
    <property type="term" value="P:protein stabilization"/>
    <property type="evidence" value="ECO:0000250"/>
    <property type="project" value="UniProtKB"/>
</dbReference>
<dbReference type="GO" id="GO:0051453">
    <property type="term" value="P:regulation of intracellular pH"/>
    <property type="evidence" value="ECO:0000250"/>
    <property type="project" value="UniProtKB"/>
</dbReference>
<dbReference type="CDD" id="cd00051">
    <property type="entry name" value="EFh"/>
    <property type="match status" value="1"/>
</dbReference>
<dbReference type="FunFam" id="1.10.238.10:FF:000093">
    <property type="entry name" value="Calcineurin B homologous protein 1"/>
    <property type="match status" value="1"/>
</dbReference>
<dbReference type="Gene3D" id="1.10.238.10">
    <property type="entry name" value="EF-hand"/>
    <property type="match status" value="1"/>
</dbReference>
<dbReference type="InterPro" id="IPR051875">
    <property type="entry name" value="Calcineurin_B_homologous"/>
</dbReference>
<dbReference type="InterPro" id="IPR011992">
    <property type="entry name" value="EF-hand-dom_pair"/>
</dbReference>
<dbReference type="InterPro" id="IPR018247">
    <property type="entry name" value="EF_Hand_1_Ca_BS"/>
</dbReference>
<dbReference type="InterPro" id="IPR002048">
    <property type="entry name" value="EF_hand_dom"/>
</dbReference>
<dbReference type="PANTHER" id="PTHR46002">
    <property type="entry name" value="EG:114D9.1 PROTEIN-RELATED"/>
    <property type="match status" value="1"/>
</dbReference>
<dbReference type="Pfam" id="PF13499">
    <property type="entry name" value="EF-hand_7"/>
    <property type="match status" value="1"/>
</dbReference>
<dbReference type="SMART" id="SM00054">
    <property type="entry name" value="EFh"/>
    <property type="match status" value="2"/>
</dbReference>
<dbReference type="SUPFAM" id="SSF47473">
    <property type="entry name" value="EF-hand"/>
    <property type="match status" value="1"/>
</dbReference>
<dbReference type="PROSITE" id="PS00018">
    <property type="entry name" value="EF_HAND_1"/>
    <property type="match status" value="1"/>
</dbReference>
<dbReference type="PROSITE" id="PS50222">
    <property type="entry name" value="EF_HAND_2"/>
    <property type="match status" value="3"/>
</dbReference>
<evidence type="ECO:0000250" key="1"/>
<evidence type="ECO:0000250" key="2">
    <source>
        <dbReference type="UniProtKB" id="P61023"/>
    </source>
</evidence>
<evidence type="ECO:0000250" key="3">
    <source>
        <dbReference type="UniProtKB" id="Q99653"/>
    </source>
</evidence>
<evidence type="ECO:0000255" key="4">
    <source>
        <dbReference type="PROSITE-ProRule" id="PRU00448"/>
    </source>
</evidence>
<evidence type="ECO:0000305" key="5"/>
<accession>Q3SYS6</accession>
<proteinExistence type="evidence at transcript level"/>